<protein>
    <recommendedName>
        <fullName>Leucine-rich repeat-containing protein 57</fullName>
    </recommendedName>
</protein>
<organism>
    <name type="scientific">Xenopus laevis</name>
    <name type="common">African clawed frog</name>
    <dbReference type="NCBI Taxonomy" id="8355"/>
    <lineage>
        <taxon>Eukaryota</taxon>
        <taxon>Metazoa</taxon>
        <taxon>Chordata</taxon>
        <taxon>Craniata</taxon>
        <taxon>Vertebrata</taxon>
        <taxon>Euteleostomi</taxon>
        <taxon>Amphibia</taxon>
        <taxon>Batrachia</taxon>
        <taxon>Anura</taxon>
        <taxon>Pipoidea</taxon>
        <taxon>Pipidae</taxon>
        <taxon>Xenopodinae</taxon>
        <taxon>Xenopus</taxon>
        <taxon>Xenopus</taxon>
    </lineage>
</organism>
<proteinExistence type="evidence at transcript level"/>
<gene>
    <name type="primary">lrrc57</name>
</gene>
<reference key="1">
    <citation type="submission" date="2004-06" db="EMBL/GenBank/DDBJ databases">
        <authorList>
            <consortium name="NIH - Xenopus Gene Collection (XGC) project"/>
        </authorList>
    </citation>
    <scope>NUCLEOTIDE SEQUENCE [LARGE SCALE MRNA]</scope>
    <source>
        <tissue>Ovary</tissue>
    </source>
</reference>
<keyword id="KW-0433">Leucine-rich repeat</keyword>
<keyword id="KW-1185">Reference proteome</keyword>
<keyword id="KW-0677">Repeat</keyword>
<accession>Q6INV3</accession>
<dbReference type="EMBL" id="BC072169">
    <property type="protein sequence ID" value="AAH72169.1"/>
    <property type="molecule type" value="mRNA"/>
</dbReference>
<dbReference type="RefSeq" id="NP_001085208.1">
    <property type="nucleotide sequence ID" value="NM_001091739.1"/>
</dbReference>
<dbReference type="SMR" id="Q6INV3"/>
<dbReference type="BioGRID" id="101668">
    <property type="interactions" value="1"/>
</dbReference>
<dbReference type="DNASU" id="432302"/>
<dbReference type="GeneID" id="432302"/>
<dbReference type="KEGG" id="xla:432302"/>
<dbReference type="AGR" id="Xenbase:XB-GENE-6255422"/>
<dbReference type="CTD" id="432302"/>
<dbReference type="Xenbase" id="XB-GENE-6255422">
    <property type="gene designation" value="lrrc57.L"/>
</dbReference>
<dbReference type="OMA" id="AYMERYT"/>
<dbReference type="OrthoDB" id="1728874at2759"/>
<dbReference type="Proteomes" id="UP000186698">
    <property type="component" value="Chromosome 8L"/>
</dbReference>
<dbReference type="Bgee" id="432302">
    <property type="expression patterns" value="Expressed in camera-type eye and 19 other cell types or tissues"/>
</dbReference>
<dbReference type="GO" id="GO:0005737">
    <property type="term" value="C:cytoplasm"/>
    <property type="evidence" value="ECO:0000318"/>
    <property type="project" value="GO_Central"/>
</dbReference>
<dbReference type="FunFam" id="3.80.10.10:FF:000458">
    <property type="entry name" value="Leucine rich repeat containing 57"/>
    <property type="match status" value="1"/>
</dbReference>
<dbReference type="FunFam" id="3.80.10.10:FF:000230">
    <property type="entry name" value="Leucine-rich repeat-containing protein 57"/>
    <property type="match status" value="1"/>
</dbReference>
<dbReference type="Gene3D" id="3.80.10.10">
    <property type="entry name" value="Ribonuclease Inhibitor"/>
    <property type="match status" value="2"/>
</dbReference>
<dbReference type="InterPro" id="IPR001611">
    <property type="entry name" value="Leu-rich_rpt"/>
</dbReference>
<dbReference type="InterPro" id="IPR003591">
    <property type="entry name" value="Leu-rich_rpt_typical-subtyp"/>
</dbReference>
<dbReference type="InterPro" id="IPR032675">
    <property type="entry name" value="LRR_dom_sf"/>
</dbReference>
<dbReference type="InterPro" id="IPR050216">
    <property type="entry name" value="LRR_domain-containing"/>
</dbReference>
<dbReference type="PANTHER" id="PTHR48051">
    <property type="match status" value="1"/>
</dbReference>
<dbReference type="PANTHER" id="PTHR48051:SF62">
    <property type="entry name" value="LEUCINE-RICH REPEAT-CONTAINING PROTEIN 57"/>
    <property type="match status" value="1"/>
</dbReference>
<dbReference type="Pfam" id="PF00560">
    <property type="entry name" value="LRR_1"/>
    <property type="match status" value="1"/>
</dbReference>
<dbReference type="Pfam" id="PF13855">
    <property type="entry name" value="LRR_8"/>
    <property type="match status" value="2"/>
</dbReference>
<dbReference type="SMART" id="SM00364">
    <property type="entry name" value="LRR_BAC"/>
    <property type="match status" value="4"/>
</dbReference>
<dbReference type="SMART" id="SM00369">
    <property type="entry name" value="LRR_TYP"/>
    <property type="match status" value="7"/>
</dbReference>
<dbReference type="SUPFAM" id="SSF52058">
    <property type="entry name" value="L domain-like"/>
    <property type="match status" value="1"/>
</dbReference>
<dbReference type="PROSITE" id="PS51450">
    <property type="entry name" value="LRR"/>
    <property type="match status" value="7"/>
</dbReference>
<sequence length="238" mass="26733">MGNSALKAHIETAQKTGVFQLTDKGLTEFPEDLQRLSGNLRTIDLSSNKIEVVPPMMGKFSLLKSLSLNNNRISRLPDELCKLKKLETLHLNGNQISQLPADFVQLLALKTLNLSGNRLKTLPAQLFKLRNLDVVDLSKNRIQAIPDEVSGLQAIELNLNQNQISQISVNISHCPRLKVLRLEENCLELSMLPPSILSDSQISLLAVEGNLFEIKKLRDLEGYDKYMEKFTATRKKFA</sequence>
<feature type="chain" id="PRO_0000227782" description="Leucine-rich repeat-containing protein 57">
    <location>
        <begin position="1"/>
        <end position="238"/>
    </location>
</feature>
<feature type="repeat" description="LRR 1">
    <location>
        <begin position="39"/>
        <end position="60"/>
    </location>
</feature>
<feature type="repeat" description="LRR 2">
    <location>
        <begin position="62"/>
        <end position="84"/>
    </location>
</feature>
<feature type="repeat" description="LRR 3">
    <location>
        <begin position="85"/>
        <end position="106"/>
    </location>
</feature>
<feature type="repeat" description="LRR 4">
    <location>
        <begin position="108"/>
        <end position="129"/>
    </location>
</feature>
<feature type="repeat" description="LRR 5">
    <location>
        <begin position="131"/>
        <end position="152"/>
    </location>
</feature>
<feature type="repeat" description="LRR 6">
    <location>
        <begin position="153"/>
        <end position="175"/>
    </location>
</feature>
<feature type="repeat" description="LRR 7">
    <location>
        <begin position="176"/>
        <end position="196"/>
    </location>
</feature>
<feature type="repeat" description="LRR 8">
    <location>
        <begin position="201"/>
        <end position="221"/>
    </location>
</feature>
<name>LRC57_XENLA</name>